<keyword id="KW-0963">Cytoplasm</keyword>
<keyword id="KW-0967">Endosome</keyword>
<keyword id="KW-0472">Membrane</keyword>
<keyword id="KW-0653">Protein transport</keyword>
<keyword id="KW-1185">Reference proteome</keyword>
<keyword id="KW-0813">Transport</keyword>
<feature type="chain" id="PRO_0000247087" description="Vacuolar protein sorting-associated protein 26A-B">
    <location>
        <begin position="1"/>
        <end position="326"/>
    </location>
</feature>
<proteinExistence type="evidence at transcript level"/>
<evidence type="ECO:0000250" key="1">
    <source>
        <dbReference type="UniProtKB" id="O75436"/>
    </source>
</evidence>
<evidence type="ECO:0000305" key="2"/>
<comment type="function">
    <text evidence="1">Acts as a component of the retromer cargo-selective complex (CSC). The CSC is believed to be the core functional component of retromer or respective retromer complex variants acting to prevent missorting of selected transmembrane cargo proteins into the lysosomal degradation pathway. Retromer mediates retrograde transport of cargo proteins from endosomes to the trans-Golgi network (TGN) (By similarity).</text>
</comment>
<comment type="subunit">
    <text evidence="1">Component of the heterotrimeric retromer cargo-selective complex (CSC) which is believed to associate with variable sorting nexins to form functionally distinct retromer complex variants (By similarity).</text>
</comment>
<comment type="subcellular location">
    <subcellularLocation>
        <location>Cytoplasm</location>
    </subcellularLocation>
    <subcellularLocation>
        <location>Endosome membrane</location>
        <topology>Peripheral membrane protein</topology>
    </subcellularLocation>
    <subcellularLocation>
        <location evidence="1">Early endosome</location>
    </subcellularLocation>
    <text evidence="1">Localizes to tubular profiles adjacent to endosomes (By similarity).</text>
</comment>
<comment type="similarity">
    <text evidence="2">Belongs to the VPS26 family.</text>
</comment>
<gene>
    <name type="primary">vps26a-b</name>
</gene>
<accession>Q6DFU4</accession>
<sequence>MSFLSGLFGPICEIEVALNDSDTRKVSEIKTEEGKVEKHFLFYDGESVAGKVNIVFKQPGKRLEHHGIRIEFVGQIELFNDKSNTHEFVNLVKELALPGELTQSRSYDFEFMQVEKPYESYNGANVRLRYFLKVTIVRRLTDLVKEYDLIVHQLASYPDVNNSIKMEVGIEDCLHIEFEYNKSKYHLKDVIVGKIYFLLVRIKIQHMELQLIKKEITGIGPSTTTETETVAKYEIMDGAPVKGESIPIRLFIAGYDPTPTMRDVNKKFSVRYFLNLVLVDEEDRRYFKQQEIILWRKAPEKIRKRTNFHQRFEPQEPQASAEEPEI</sequence>
<dbReference type="EMBL" id="BC076639">
    <property type="protein sequence ID" value="AAH76639.1"/>
    <property type="molecule type" value="mRNA"/>
</dbReference>
<dbReference type="SMR" id="Q6DFU4"/>
<dbReference type="DNASU" id="446981"/>
<dbReference type="GeneID" id="446981"/>
<dbReference type="KEGG" id="xla:446981"/>
<dbReference type="AGR" id="Xenbase:XB-GENE-6254832"/>
<dbReference type="CTD" id="446981"/>
<dbReference type="Xenbase" id="XB-GENE-6254832">
    <property type="gene designation" value="vps26a.S"/>
</dbReference>
<dbReference type="OrthoDB" id="3821113at2759"/>
<dbReference type="Proteomes" id="UP000186698">
    <property type="component" value="Chromosome 7S"/>
</dbReference>
<dbReference type="Bgee" id="446981">
    <property type="expression patterns" value="Expressed in zone of skin and 19 other cell types or tissues"/>
</dbReference>
<dbReference type="GO" id="GO:0005829">
    <property type="term" value="C:cytosol"/>
    <property type="evidence" value="ECO:0007669"/>
    <property type="project" value="GOC"/>
</dbReference>
<dbReference type="GO" id="GO:0005769">
    <property type="term" value="C:early endosome"/>
    <property type="evidence" value="ECO:0007669"/>
    <property type="project" value="UniProtKB-SubCell"/>
</dbReference>
<dbReference type="GO" id="GO:0005768">
    <property type="term" value="C:endosome"/>
    <property type="evidence" value="ECO:0000250"/>
    <property type="project" value="UniProtKB"/>
</dbReference>
<dbReference type="GO" id="GO:0010008">
    <property type="term" value="C:endosome membrane"/>
    <property type="evidence" value="ECO:0007669"/>
    <property type="project" value="UniProtKB-SubCell"/>
</dbReference>
<dbReference type="GO" id="GO:0030904">
    <property type="term" value="C:retromer complex"/>
    <property type="evidence" value="ECO:0000318"/>
    <property type="project" value="GO_Central"/>
</dbReference>
<dbReference type="GO" id="GO:0031982">
    <property type="term" value="C:vesicle"/>
    <property type="evidence" value="ECO:0000250"/>
    <property type="project" value="UniProtKB"/>
</dbReference>
<dbReference type="GO" id="GO:0006886">
    <property type="term" value="P:intracellular protein transport"/>
    <property type="evidence" value="ECO:0000318"/>
    <property type="project" value="GO_Central"/>
</dbReference>
<dbReference type="GO" id="GO:0042147">
    <property type="term" value="P:retrograde transport, endosome to Golgi"/>
    <property type="evidence" value="ECO:0000318"/>
    <property type="project" value="GO_Central"/>
</dbReference>
<dbReference type="FunFam" id="2.60.40.640:FF:000001">
    <property type="entry name" value="Vacuolar protein sorting-associated protein 26A"/>
    <property type="match status" value="1"/>
</dbReference>
<dbReference type="FunFam" id="2.60.40.640:FF:000002">
    <property type="entry name" value="Vacuolar protein sorting-associated protein 26A"/>
    <property type="match status" value="1"/>
</dbReference>
<dbReference type="Gene3D" id="2.60.40.640">
    <property type="match status" value="2"/>
</dbReference>
<dbReference type="InterPro" id="IPR014752">
    <property type="entry name" value="Arrestin-like_C"/>
</dbReference>
<dbReference type="InterPro" id="IPR028934">
    <property type="entry name" value="Vps26-related"/>
</dbReference>
<dbReference type="PANTHER" id="PTHR12233">
    <property type="entry name" value="VACUOLAR PROTEIN SORTING 26 RELATED"/>
    <property type="match status" value="1"/>
</dbReference>
<dbReference type="Pfam" id="PF03643">
    <property type="entry name" value="Vps26"/>
    <property type="match status" value="1"/>
</dbReference>
<organism>
    <name type="scientific">Xenopus laevis</name>
    <name type="common">African clawed frog</name>
    <dbReference type="NCBI Taxonomy" id="8355"/>
    <lineage>
        <taxon>Eukaryota</taxon>
        <taxon>Metazoa</taxon>
        <taxon>Chordata</taxon>
        <taxon>Craniata</taxon>
        <taxon>Vertebrata</taxon>
        <taxon>Euteleostomi</taxon>
        <taxon>Amphibia</taxon>
        <taxon>Batrachia</taxon>
        <taxon>Anura</taxon>
        <taxon>Pipoidea</taxon>
        <taxon>Pipidae</taxon>
        <taxon>Xenopodinae</taxon>
        <taxon>Xenopus</taxon>
        <taxon>Xenopus</taxon>
    </lineage>
</organism>
<name>V26AB_XENLA</name>
<protein>
    <recommendedName>
        <fullName>Vacuolar protein sorting-associated protein 26A-B</fullName>
    </recommendedName>
    <alternativeName>
        <fullName>Vesicle protein sorting 26A-B</fullName>
    </alternativeName>
</protein>
<reference key="1">
    <citation type="submission" date="2004-07" db="EMBL/GenBank/DDBJ databases">
        <authorList>
            <consortium name="NIH - Xenopus Gene Collection (XGC) project"/>
        </authorList>
    </citation>
    <scope>NUCLEOTIDE SEQUENCE [LARGE SCALE MRNA]</scope>
    <source>
        <tissue>Liver</tissue>
    </source>
</reference>